<reference key="1">
    <citation type="journal article" date="2016" name="Stand. Genomic Sci.">
        <title>Complete genome sequence of the Antarctic Halorubrum lacusprofundi type strain ACAM 34.</title>
        <authorList>
            <person name="Anderson I.J."/>
            <person name="DasSarma P."/>
            <person name="Lucas S."/>
            <person name="Copeland A."/>
            <person name="Lapidus A."/>
            <person name="Del Rio T.G."/>
            <person name="Tice H."/>
            <person name="Dalin E."/>
            <person name="Bruce D.C."/>
            <person name="Goodwin L."/>
            <person name="Pitluck S."/>
            <person name="Sims D."/>
            <person name="Brettin T.S."/>
            <person name="Detter J.C."/>
            <person name="Han C.S."/>
            <person name="Larimer F."/>
            <person name="Hauser L."/>
            <person name="Land M."/>
            <person name="Ivanova N."/>
            <person name="Richardson P."/>
            <person name="Cavicchioli R."/>
            <person name="DasSarma S."/>
            <person name="Woese C.R."/>
            <person name="Kyrpides N.C."/>
        </authorList>
    </citation>
    <scope>NUCLEOTIDE SEQUENCE [LARGE SCALE GENOMIC DNA]</scope>
    <source>
        <strain>ATCC 49239 / DSM 5036 / JCM 8891 / ACAM 34</strain>
    </source>
</reference>
<dbReference type="EMBL" id="CP001365">
    <property type="protein sequence ID" value="ACM57561.1"/>
    <property type="molecule type" value="Genomic_DNA"/>
</dbReference>
<dbReference type="RefSeq" id="WP_015910686.1">
    <property type="nucleotide sequence ID" value="NC_012029.1"/>
</dbReference>
<dbReference type="SMR" id="B9LQE0"/>
<dbReference type="GeneID" id="7402002"/>
<dbReference type="KEGG" id="hla:Hlac_1983"/>
<dbReference type="eggNOG" id="arCOG04372">
    <property type="taxonomic scope" value="Archaea"/>
</dbReference>
<dbReference type="HOGENOM" id="CLU_074237_4_0_2"/>
<dbReference type="Proteomes" id="UP000000740">
    <property type="component" value="Chromosome 1"/>
</dbReference>
<dbReference type="GO" id="GO:0015934">
    <property type="term" value="C:large ribosomal subunit"/>
    <property type="evidence" value="ECO:0007669"/>
    <property type="project" value="TreeGrafter"/>
</dbReference>
<dbReference type="GO" id="GO:0070180">
    <property type="term" value="F:large ribosomal subunit rRNA binding"/>
    <property type="evidence" value="ECO:0007669"/>
    <property type="project" value="UniProtKB-UniRule"/>
</dbReference>
<dbReference type="GO" id="GO:0003735">
    <property type="term" value="F:structural constituent of ribosome"/>
    <property type="evidence" value="ECO:0007669"/>
    <property type="project" value="InterPro"/>
</dbReference>
<dbReference type="GO" id="GO:0006412">
    <property type="term" value="P:translation"/>
    <property type="evidence" value="ECO:0007669"/>
    <property type="project" value="UniProtKB-UniRule"/>
</dbReference>
<dbReference type="CDD" id="cd00349">
    <property type="entry name" value="Ribosomal_L11"/>
    <property type="match status" value="1"/>
</dbReference>
<dbReference type="Gene3D" id="1.10.10.250">
    <property type="entry name" value="Ribosomal protein L11, C-terminal domain"/>
    <property type="match status" value="1"/>
</dbReference>
<dbReference type="Gene3D" id="3.30.1550.10">
    <property type="entry name" value="Ribosomal protein L11/L12, N-terminal domain"/>
    <property type="match status" value="1"/>
</dbReference>
<dbReference type="HAMAP" id="MF_00736">
    <property type="entry name" value="Ribosomal_uL11"/>
    <property type="match status" value="1"/>
</dbReference>
<dbReference type="InterPro" id="IPR000911">
    <property type="entry name" value="Ribosomal_uL11"/>
</dbReference>
<dbReference type="InterPro" id="IPR020783">
    <property type="entry name" value="Ribosomal_uL11_C"/>
</dbReference>
<dbReference type="InterPro" id="IPR036769">
    <property type="entry name" value="Ribosomal_uL11_C_sf"/>
</dbReference>
<dbReference type="InterPro" id="IPR020785">
    <property type="entry name" value="Ribosomal_uL11_CS"/>
</dbReference>
<dbReference type="InterPro" id="IPR020784">
    <property type="entry name" value="Ribosomal_uL11_N"/>
</dbReference>
<dbReference type="InterPro" id="IPR036796">
    <property type="entry name" value="Ribosomal_uL11_N_sf"/>
</dbReference>
<dbReference type="NCBIfam" id="NF002232">
    <property type="entry name" value="PRK01143.1"/>
    <property type="match status" value="1"/>
</dbReference>
<dbReference type="PANTHER" id="PTHR11661">
    <property type="entry name" value="60S RIBOSOMAL PROTEIN L12"/>
    <property type="match status" value="1"/>
</dbReference>
<dbReference type="PANTHER" id="PTHR11661:SF1">
    <property type="entry name" value="LARGE RIBOSOMAL SUBUNIT PROTEIN UL11M"/>
    <property type="match status" value="1"/>
</dbReference>
<dbReference type="Pfam" id="PF00298">
    <property type="entry name" value="Ribosomal_L11"/>
    <property type="match status" value="1"/>
</dbReference>
<dbReference type="Pfam" id="PF03946">
    <property type="entry name" value="Ribosomal_L11_N"/>
    <property type="match status" value="1"/>
</dbReference>
<dbReference type="SMART" id="SM00649">
    <property type="entry name" value="RL11"/>
    <property type="match status" value="1"/>
</dbReference>
<dbReference type="SUPFAM" id="SSF54747">
    <property type="entry name" value="Ribosomal L11/L12e N-terminal domain"/>
    <property type="match status" value="1"/>
</dbReference>
<dbReference type="SUPFAM" id="SSF46906">
    <property type="entry name" value="Ribosomal protein L11, C-terminal domain"/>
    <property type="match status" value="1"/>
</dbReference>
<dbReference type="PROSITE" id="PS00359">
    <property type="entry name" value="RIBOSOMAL_L11"/>
    <property type="match status" value="1"/>
</dbReference>
<comment type="function">
    <text evidence="1">Forms part of the ribosomal stalk which helps the ribosome interact with GTP-bound translation factors.</text>
</comment>
<comment type="subunit">
    <text evidence="1">Part of the ribosomal stalk of the 50S ribosomal subunit. Interacts with L10 and the large rRNA to form the base of the stalk. L10 forms an elongated spine to which L12 dimers bind in a sequential fashion forming a multimeric L10(L12)X complex.</text>
</comment>
<comment type="similarity">
    <text evidence="1">Belongs to the universal ribosomal protein uL11 family.</text>
</comment>
<protein>
    <recommendedName>
        <fullName evidence="1">Large ribosomal subunit protein uL11</fullName>
    </recommendedName>
    <alternativeName>
        <fullName evidence="3">50S ribosomal protein L11</fullName>
    </alternativeName>
</protein>
<feature type="chain" id="PRO_1000195754" description="Large ribosomal subunit protein uL11">
    <location>
        <begin position="1"/>
        <end position="158"/>
    </location>
</feature>
<feature type="region of interest" description="Disordered" evidence="2">
    <location>
        <begin position="1"/>
        <end position="28"/>
    </location>
</feature>
<accession>B9LQE0</accession>
<sequence length="158" mass="16478">MAGTIEALVPGGQATPGPPLGPELGPTPVDVQDVVAQINDETAAFDGMEVPVTVEYDDDGSFTIEVGVPPTAELIKDEAGFETGSGEPQVDFVADMSIEQVKKVAEQKSTDLLAYDVKNAAKEVGGTCASLGVTIEGEDARTFDDRVDAGDYDDVLDE</sequence>
<gene>
    <name evidence="1" type="primary">rpl11</name>
    <name type="ordered locus">Hlac_1983</name>
</gene>
<name>RL11_HALLT</name>
<keyword id="KW-1185">Reference proteome</keyword>
<keyword id="KW-0687">Ribonucleoprotein</keyword>
<keyword id="KW-0689">Ribosomal protein</keyword>
<keyword id="KW-0694">RNA-binding</keyword>
<keyword id="KW-0699">rRNA-binding</keyword>
<organism>
    <name type="scientific">Halorubrum lacusprofundi (strain ATCC 49239 / DSM 5036 / JCM 8891 / ACAM 34)</name>
    <dbReference type="NCBI Taxonomy" id="416348"/>
    <lineage>
        <taxon>Archaea</taxon>
        <taxon>Methanobacteriati</taxon>
        <taxon>Methanobacteriota</taxon>
        <taxon>Stenosarchaea group</taxon>
        <taxon>Halobacteria</taxon>
        <taxon>Halobacteriales</taxon>
        <taxon>Haloferacaceae</taxon>
        <taxon>Halorubrum</taxon>
    </lineage>
</organism>
<evidence type="ECO:0000255" key="1">
    <source>
        <dbReference type="HAMAP-Rule" id="MF_00736"/>
    </source>
</evidence>
<evidence type="ECO:0000256" key="2">
    <source>
        <dbReference type="SAM" id="MobiDB-lite"/>
    </source>
</evidence>
<evidence type="ECO:0000305" key="3"/>
<proteinExistence type="inferred from homology"/>